<proteinExistence type="inferred from homology"/>
<keyword id="KW-0143">Chaperone</keyword>
<keyword id="KW-0496">Mitochondrion</keyword>
<keyword id="KW-1185">Reference proteome</keyword>
<keyword id="KW-0809">Transit peptide</keyword>
<comment type="function">
    <text evidence="1">Assembly factor required for Rieske Fe-S protein RIP1 incorporation into the cytochrome b-c1 (CIII) complex. Functions as a chaperone, binding to this subunit within the mitochondrial matrix and stabilizing it prior to its translocation and insertion into the late CIII dimeric intermediate within the mitochondrial inner membrane. Modulates the mitochondrial matrix zinc pool (By similarity).</text>
</comment>
<comment type="subunit">
    <text evidence="1">Interacts with RIP1.</text>
</comment>
<comment type="subcellular location">
    <subcellularLocation>
        <location evidence="1">Mitochondrion matrix</location>
    </subcellularLocation>
</comment>
<comment type="similarity">
    <text evidence="4">Belongs to the complex I LYR family. MZM1 subfamily.</text>
</comment>
<organism>
    <name type="scientific">Verticillium alfalfae (strain VaMs.102 / ATCC MYA-4576 / FGSC 10136)</name>
    <name type="common">Verticillium wilt of alfalfa</name>
    <name type="synonym">Verticillium albo-atrum</name>
    <dbReference type="NCBI Taxonomy" id="526221"/>
    <lineage>
        <taxon>Eukaryota</taxon>
        <taxon>Fungi</taxon>
        <taxon>Dikarya</taxon>
        <taxon>Ascomycota</taxon>
        <taxon>Pezizomycotina</taxon>
        <taxon>Sordariomycetes</taxon>
        <taxon>Hypocreomycetidae</taxon>
        <taxon>Glomerellales</taxon>
        <taxon>Plectosphaerellaceae</taxon>
        <taxon>Verticillium</taxon>
    </lineage>
</organism>
<sequence>MTALVAYRNLWRAANIAFQGDAPVLAAARQQIRDNFREKSTLPANDPTIQPMIEKAEEVAKFLRHNLVQGQPQGNDSFKLRIHKDTERGDNDSIKTAGQGKSSGGCCQG</sequence>
<feature type="transit peptide" description="Mitochondrion" evidence="2">
    <location>
        <begin position="1"/>
        <end status="unknown"/>
    </location>
</feature>
<feature type="chain" id="PRO_0000405519" description="Mitochondrial zinc maintenance protein 1, mitochondrial">
    <location>
        <begin status="unknown"/>
        <end position="109"/>
    </location>
</feature>
<feature type="region of interest" description="Disordered" evidence="3">
    <location>
        <begin position="68"/>
        <end position="109"/>
    </location>
</feature>
<feature type="compositionally biased region" description="Basic and acidic residues" evidence="3">
    <location>
        <begin position="83"/>
        <end position="93"/>
    </location>
</feature>
<evidence type="ECO:0000250" key="1"/>
<evidence type="ECO:0000255" key="2"/>
<evidence type="ECO:0000256" key="3">
    <source>
        <dbReference type="SAM" id="MobiDB-lite"/>
    </source>
</evidence>
<evidence type="ECO:0000305" key="4"/>
<name>MZM1_VERA1</name>
<accession>C9SBR9</accession>
<dbReference type="EMBL" id="DS985215">
    <property type="protein sequence ID" value="EEY15803.1"/>
    <property type="molecule type" value="Genomic_DNA"/>
</dbReference>
<dbReference type="RefSeq" id="XP_003007724.1">
    <property type="nucleotide sequence ID" value="XM_003007678.1"/>
</dbReference>
<dbReference type="SMR" id="C9SBR9"/>
<dbReference type="STRING" id="526221.C9SBR9"/>
<dbReference type="GeneID" id="9535351"/>
<dbReference type="KEGG" id="val:VDBG_01912"/>
<dbReference type="eggNOG" id="ENOG502S6EF">
    <property type="taxonomic scope" value="Eukaryota"/>
</dbReference>
<dbReference type="HOGENOM" id="CLU_147114_2_2_1"/>
<dbReference type="OMA" id="KYKLRIH"/>
<dbReference type="OrthoDB" id="529194at2759"/>
<dbReference type="Proteomes" id="UP000008698">
    <property type="component" value="Unassembled WGS sequence"/>
</dbReference>
<dbReference type="GO" id="GO:0005759">
    <property type="term" value="C:mitochondrial matrix"/>
    <property type="evidence" value="ECO:0007669"/>
    <property type="project" value="UniProtKB-SubCell"/>
</dbReference>
<dbReference type="GO" id="GO:0044183">
    <property type="term" value="F:protein folding chaperone"/>
    <property type="evidence" value="ECO:0007669"/>
    <property type="project" value="TreeGrafter"/>
</dbReference>
<dbReference type="GO" id="GO:0034551">
    <property type="term" value="P:mitochondrial respiratory chain complex III assembly"/>
    <property type="evidence" value="ECO:0007669"/>
    <property type="project" value="InterPro"/>
</dbReference>
<dbReference type="CDD" id="cd20267">
    <property type="entry name" value="Complex1_LYR_LYRM7"/>
    <property type="match status" value="1"/>
</dbReference>
<dbReference type="InterPro" id="IPR045298">
    <property type="entry name" value="Complex1_LYR_LYRM7"/>
</dbReference>
<dbReference type="InterPro" id="IPR050435">
    <property type="entry name" value="MZM1/LYRM7"/>
</dbReference>
<dbReference type="PANTHER" id="PTHR46749">
    <property type="entry name" value="COMPLEX III ASSEMBLY FACTOR LYRM7"/>
    <property type="match status" value="1"/>
</dbReference>
<dbReference type="PANTHER" id="PTHR46749:SF1">
    <property type="entry name" value="COMPLEX III ASSEMBLY FACTOR LYRM7"/>
    <property type="match status" value="1"/>
</dbReference>
<reference key="1">
    <citation type="journal article" date="2011" name="PLoS Pathog.">
        <title>Comparative genomics yields insights into niche adaptation of plant vascular wilt pathogens.</title>
        <authorList>
            <person name="Klosterman S.J."/>
            <person name="Subbarao K.V."/>
            <person name="Kang S."/>
            <person name="Veronese P."/>
            <person name="Gold S.E."/>
            <person name="Thomma B.P.H.J."/>
            <person name="Chen Z."/>
            <person name="Henrissat B."/>
            <person name="Lee Y.-H."/>
            <person name="Park J."/>
            <person name="Garcia-Pedrajas M.D."/>
            <person name="Barbara D.J."/>
            <person name="Anchieta A."/>
            <person name="de Jonge R."/>
            <person name="Santhanam P."/>
            <person name="Maruthachalam K."/>
            <person name="Atallah Z."/>
            <person name="Amyotte S.G."/>
            <person name="Paz Z."/>
            <person name="Inderbitzin P."/>
            <person name="Hayes R.J."/>
            <person name="Heiman D.I."/>
            <person name="Young S."/>
            <person name="Zeng Q."/>
            <person name="Engels R."/>
            <person name="Galagan J."/>
            <person name="Cuomo C.A."/>
            <person name="Dobinson K.F."/>
            <person name="Ma L.-J."/>
        </authorList>
    </citation>
    <scope>NUCLEOTIDE SEQUENCE [LARGE SCALE GENOMIC DNA]</scope>
    <source>
        <strain>VaMs.102 / ATCC MYA-4576 / FGSC 10136</strain>
    </source>
</reference>
<protein>
    <recommendedName>
        <fullName>Mitochondrial zinc maintenance protein 1, mitochondrial</fullName>
    </recommendedName>
</protein>
<gene>
    <name type="primary">MZM1</name>
    <name type="ORF">VDBG_01912</name>
</gene>